<feature type="chain" id="PRO_0000333038" description="Transmembrane protein 8B">
    <location>
        <begin position="1"/>
        <end position="472"/>
    </location>
</feature>
<feature type="topological domain" description="Extracellular" evidence="3">
    <location>
        <begin position="1"/>
        <end position="233"/>
    </location>
</feature>
<feature type="transmembrane region" description="Helical" evidence="3">
    <location>
        <begin position="234"/>
        <end position="254"/>
    </location>
</feature>
<feature type="topological domain" description="Cytoplasmic" evidence="3">
    <location>
        <begin position="255"/>
        <end position="257"/>
    </location>
</feature>
<feature type="transmembrane region" description="Helical" evidence="3">
    <location>
        <begin position="258"/>
        <end position="277"/>
    </location>
</feature>
<feature type="topological domain" description="Extracellular" evidence="3">
    <location>
        <begin position="278"/>
        <end position="292"/>
    </location>
</feature>
<feature type="transmembrane region" description="Helical" evidence="3">
    <location>
        <begin position="293"/>
        <end position="313"/>
    </location>
</feature>
<feature type="topological domain" description="Cytoplasmic" evidence="3">
    <location>
        <begin position="314"/>
        <end position="315"/>
    </location>
</feature>
<feature type="transmembrane region" description="Helical" evidence="3">
    <location>
        <begin position="316"/>
        <end position="336"/>
    </location>
</feature>
<feature type="topological domain" description="Extracellular" evidence="3">
    <location>
        <begin position="337"/>
        <end position="342"/>
    </location>
</feature>
<feature type="transmembrane region" description="Helical" evidence="3">
    <location>
        <begin position="343"/>
        <end position="363"/>
    </location>
</feature>
<feature type="topological domain" description="Cytoplasmic" evidence="3">
    <location>
        <begin position="364"/>
        <end position="379"/>
    </location>
</feature>
<feature type="transmembrane region" description="Helical" evidence="3">
    <location>
        <begin position="380"/>
        <end position="400"/>
    </location>
</feature>
<feature type="topological domain" description="Extracellular" evidence="3">
    <location>
        <begin position="401"/>
        <end position="405"/>
    </location>
</feature>
<feature type="transmembrane region" description="Helical" evidence="3">
    <location>
        <begin position="406"/>
        <end position="426"/>
    </location>
</feature>
<feature type="topological domain" description="Cytoplasmic" evidence="3">
    <location>
        <begin position="427"/>
        <end position="472"/>
    </location>
</feature>
<feature type="domain" description="EGF-like">
    <location>
        <begin position="182"/>
        <end position="221"/>
    </location>
</feature>
<feature type="region of interest" description="Disordered" evidence="4">
    <location>
        <begin position="1"/>
        <end position="37"/>
    </location>
</feature>
<feature type="glycosylation site" description="N-linked (GlcNAc...) asparagine" evidence="3">
    <location>
        <position position="92"/>
    </location>
</feature>
<feature type="glycosylation site" description="N-linked (GlcNAc...) asparagine" evidence="3">
    <location>
        <position position="100"/>
    </location>
</feature>
<feature type="disulfide bond" evidence="1">
    <location>
        <begin position="186"/>
        <end position="196"/>
    </location>
</feature>
<feature type="disulfide bond" evidence="1">
    <location>
        <begin position="190"/>
        <end position="209"/>
    </location>
</feature>
<feature type="disulfide bond" evidence="1">
    <location>
        <begin position="211"/>
        <end position="220"/>
    </location>
</feature>
<proteinExistence type="evidence at transcript level"/>
<protein>
    <recommendedName>
        <fullName>Transmembrane protein 8B</fullName>
    </recommendedName>
    <alternativeName>
        <fullName>Protein NGX6</fullName>
    </alternativeName>
</protein>
<dbReference type="EMBL" id="BC147996">
    <property type="protein sequence ID" value="AAI47997.1"/>
    <property type="molecule type" value="mRNA"/>
</dbReference>
<dbReference type="EMBL" id="BC149881">
    <property type="protein sequence ID" value="AAI49882.1"/>
    <property type="molecule type" value="mRNA"/>
</dbReference>
<dbReference type="RefSeq" id="NP_001096805.1">
    <property type="nucleotide sequence ID" value="NM_001103335.1"/>
</dbReference>
<dbReference type="SMR" id="A6QLK4"/>
<dbReference type="FunCoup" id="A6QLK4">
    <property type="interactions" value="615"/>
</dbReference>
<dbReference type="STRING" id="9913.ENSBTAP00000015212"/>
<dbReference type="GlyCosmos" id="A6QLK4">
    <property type="glycosylation" value="2 sites, No reported glycans"/>
</dbReference>
<dbReference type="GlyGen" id="A6QLK4">
    <property type="glycosylation" value="2 sites"/>
</dbReference>
<dbReference type="PaxDb" id="9913-ENSBTAP00000015212"/>
<dbReference type="GeneID" id="100125302"/>
<dbReference type="KEGG" id="bta:100125302"/>
<dbReference type="CTD" id="51754"/>
<dbReference type="eggNOG" id="ENOG502QQ7Q">
    <property type="taxonomic scope" value="Eukaryota"/>
</dbReference>
<dbReference type="HOGENOM" id="CLU_012979_1_0_1"/>
<dbReference type="InParanoid" id="A6QLK4"/>
<dbReference type="OrthoDB" id="69646at2759"/>
<dbReference type="Proteomes" id="UP000009136">
    <property type="component" value="Unplaced"/>
</dbReference>
<dbReference type="GO" id="GO:0005783">
    <property type="term" value="C:endoplasmic reticulum"/>
    <property type="evidence" value="ECO:0007669"/>
    <property type="project" value="UniProtKB-SubCell"/>
</dbReference>
<dbReference type="GO" id="GO:0005739">
    <property type="term" value="C:mitochondrion"/>
    <property type="evidence" value="ECO:0007669"/>
    <property type="project" value="UniProtKB-SubCell"/>
</dbReference>
<dbReference type="GO" id="GO:0005634">
    <property type="term" value="C:nucleus"/>
    <property type="evidence" value="ECO:0007669"/>
    <property type="project" value="UniProtKB-SubCell"/>
</dbReference>
<dbReference type="GO" id="GO:0005886">
    <property type="term" value="C:plasma membrane"/>
    <property type="evidence" value="ECO:0007669"/>
    <property type="project" value="UniProtKB-SubCell"/>
</dbReference>
<dbReference type="GO" id="GO:0007155">
    <property type="term" value="P:cell adhesion"/>
    <property type="evidence" value="ECO:0007669"/>
    <property type="project" value="UniProtKB-KW"/>
</dbReference>
<dbReference type="InterPro" id="IPR000742">
    <property type="entry name" value="EGF-like_dom"/>
</dbReference>
<dbReference type="InterPro" id="IPR021910">
    <property type="entry name" value="NGX6/PGAP6/MYMK"/>
</dbReference>
<dbReference type="PANTHER" id="PTHR14319">
    <property type="entry name" value="FIVE-SPAN TRANSMEMBRANE PROTEIN M83"/>
    <property type="match status" value="1"/>
</dbReference>
<dbReference type="PANTHER" id="PTHR14319:SF6">
    <property type="entry name" value="TRANSMEMBRANE PROTEIN 8B"/>
    <property type="match status" value="1"/>
</dbReference>
<dbReference type="Pfam" id="PF12036">
    <property type="entry name" value="DUF3522"/>
    <property type="match status" value="1"/>
</dbReference>
<dbReference type="PROSITE" id="PS00022">
    <property type="entry name" value="EGF_1"/>
    <property type="match status" value="1"/>
</dbReference>
<dbReference type="PROSITE" id="PS01186">
    <property type="entry name" value="EGF_2"/>
    <property type="match status" value="1"/>
</dbReference>
<gene>
    <name type="primary">TMEM8B</name>
</gene>
<sequence length="472" mass="52088">MNMPQSLGNQPLPPEPPSLRTPAEGPGATSPPEHCWPVRPTLRNELDTFSVHFYIFFGPSVALPPERPAVFALRLLPVLDSGGVLSLELQLNVSSLRQENVTVFGCLTHEVPLSLGDAAVTCSKESLAGFLLTVSAASRVARLRIPFPQTGTWFLTLRSLCGVGPRFVRCRNATAEVRLRTFLSPCVDDCGPYGQCKLLRTHNYLYAACECKAGWRGWGCTDSADALTYGFQLLSTLLLCLSNLMFLPPVVLAIRSRYVLEAAVYTFTMFFSTFYHACDQPGIVVFCIMDYDVLQFCDFLGSLMSVWVTVIAMARLQPVVKQVLYLLGAMLLSMALQLDRHGLWNLLGPSLFALGILATAWTVRSVRRRHCYPPTWRRWLFCLCPGSLIAGSAILLYAFVETRDNYFYIHSIWHMLIAGSVGFLLPPRAKTDRRVPSGARARGCGYQLCINEQEELGLVGPGGATVSSICAS</sequence>
<reference key="1">
    <citation type="submission" date="2007-06" db="EMBL/GenBank/DDBJ databases">
        <authorList>
            <consortium name="NIH - Mammalian Gene Collection (MGC) project"/>
        </authorList>
    </citation>
    <scope>NUCLEOTIDE SEQUENCE [LARGE SCALE MRNA]</scope>
    <source>
        <strain>Hereford</strain>
        <tissue>Basal ganglia</tissue>
        <tissue>Hippocampus</tissue>
    </source>
</reference>
<evidence type="ECO:0000250" key="1"/>
<evidence type="ECO:0000250" key="2">
    <source>
        <dbReference type="UniProtKB" id="A6NDV4"/>
    </source>
</evidence>
<evidence type="ECO:0000255" key="3"/>
<evidence type="ECO:0000256" key="4">
    <source>
        <dbReference type="SAM" id="MobiDB-lite"/>
    </source>
</evidence>
<evidence type="ECO:0000305" key="5"/>
<comment type="function">
    <text evidence="1">May function as a regulator of the EGFR pathway. Probable tumor suppressor which may function in cell growth, proliferation and adhesion (By similarity).</text>
</comment>
<comment type="subunit">
    <text evidence="1">May interact with EZR.</text>
</comment>
<comment type="subcellular location">
    <subcellularLocation>
        <location evidence="2">Cell membrane</location>
        <topology evidence="2">Multi-pass membrane protein</topology>
    </subcellularLocation>
    <subcellularLocation>
        <location evidence="2">Cytoplasm</location>
    </subcellularLocation>
    <subcellularLocation>
        <location evidence="2">Nucleus</location>
    </subcellularLocation>
    <subcellularLocation>
        <location evidence="2">Mitochondrion</location>
    </subcellularLocation>
    <subcellularLocation>
        <location evidence="2">Endoplasmic reticulum</location>
    </subcellularLocation>
    <text evidence="2">Also detected in mitochondrion and endoplasmic reticulum.</text>
</comment>
<comment type="PTM">
    <text evidence="1">N-glycosylated.</text>
</comment>
<comment type="similarity">
    <text evidence="5">Belongs to the TMEM8 family.</text>
</comment>
<keyword id="KW-0130">Cell adhesion</keyword>
<keyword id="KW-1003">Cell membrane</keyword>
<keyword id="KW-0963">Cytoplasm</keyword>
<keyword id="KW-1015">Disulfide bond</keyword>
<keyword id="KW-0245">EGF-like domain</keyword>
<keyword id="KW-0256">Endoplasmic reticulum</keyword>
<keyword id="KW-0325">Glycoprotein</keyword>
<keyword id="KW-0341">Growth regulation</keyword>
<keyword id="KW-0472">Membrane</keyword>
<keyword id="KW-0496">Mitochondrion</keyword>
<keyword id="KW-0539">Nucleus</keyword>
<keyword id="KW-1185">Reference proteome</keyword>
<keyword id="KW-0812">Transmembrane</keyword>
<keyword id="KW-1133">Transmembrane helix</keyword>
<name>TMM8B_BOVIN</name>
<accession>A6QLK4</accession>
<accession>A6QQL1</accession>
<organism>
    <name type="scientific">Bos taurus</name>
    <name type="common">Bovine</name>
    <dbReference type="NCBI Taxonomy" id="9913"/>
    <lineage>
        <taxon>Eukaryota</taxon>
        <taxon>Metazoa</taxon>
        <taxon>Chordata</taxon>
        <taxon>Craniata</taxon>
        <taxon>Vertebrata</taxon>
        <taxon>Euteleostomi</taxon>
        <taxon>Mammalia</taxon>
        <taxon>Eutheria</taxon>
        <taxon>Laurasiatheria</taxon>
        <taxon>Artiodactyla</taxon>
        <taxon>Ruminantia</taxon>
        <taxon>Pecora</taxon>
        <taxon>Bovidae</taxon>
        <taxon>Bovinae</taxon>
        <taxon>Bos</taxon>
    </lineage>
</organism>